<dbReference type="EMBL" id="AE002098">
    <property type="protein sequence ID" value="AAF40601.1"/>
    <property type="molecule type" value="Genomic_DNA"/>
</dbReference>
<dbReference type="PIR" id="A81231">
    <property type="entry name" value="A81231"/>
</dbReference>
<dbReference type="RefSeq" id="NP_273201.1">
    <property type="nucleotide sequence ID" value="NC_003112.2"/>
</dbReference>
<dbReference type="RefSeq" id="WP_002215402.1">
    <property type="nucleotide sequence ID" value="NC_003112.2"/>
</dbReference>
<dbReference type="SMR" id="P61057"/>
<dbReference type="FunCoup" id="P61057">
    <property type="interactions" value="645"/>
</dbReference>
<dbReference type="STRING" id="122586.NMB0143"/>
<dbReference type="PaxDb" id="122586-NMB0143"/>
<dbReference type="GeneID" id="93387218"/>
<dbReference type="KEGG" id="nme:NMB0143"/>
<dbReference type="PATRIC" id="fig|122586.8.peg.184"/>
<dbReference type="HOGENOM" id="CLU_041575_5_2_4"/>
<dbReference type="InParanoid" id="P61057"/>
<dbReference type="OrthoDB" id="9803201at2"/>
<dbReference type="Proteomes" id="UP000000425">
    <property type="component" value="Chromosome"/>
</dbReference>
<dbReference type="GO" id="GO:1990904">
    <property type="term" value="C:ribonucleoprotein complex"/>
    <property type="evidence" value="ECO:0007669"/>
    <property type="project" value="UniProtKB-KW"/>
</dbReference>
<dbReference type="GO" id="GO:0005840">
    <property type="term" value="C:ribosome"/>
    <property type="evidence" value="ECO:0007669"/>
    <property type="project" value="UniProtKB-KW"/>
</dbReference>
<dbReference type="GO" id="GO:0019843">
    <property type="term" value="F:rRNA binding"/>
    <property type="evidence" value="ECO:0007669"/>
    <property type="project" value="UniProtKB-UniRule"/>
</dbReference>
<dbReference type="GO" id="GO:0003735">
    <property type="term" value="F:structural constituent of ribosome"/>
    <property type="evidence" value="ECO:0000318"/>
    <property type="project" value="GO_Central"/>
</dbReference>
<dbReference type="GO" id="GO:0006412">
    <property type="term" value="P:translation"/>
    <property type="evidence" value="ECO:0007669"/>
    <property type="project" value="UniProtKB-UniRule"/>
</dbReference>
<dbReference type="FunFam" id="3.40.1370.10:FF:000010">
    <property type="entry name" value="50S ribosomal protein L4"/>
    <property type="match status" value="1"/>
</dbReference>
<dbReference type="Gene3D" id="3.40.1370.10">
    <property type="match status" value="1"/>
</dbReference>
<dbReference type="HAMAP" id="MF_01328_B">
    <property type="entry name" value="Ribosomal_uL4_B"/>
    <property type="match status" value="1"/>
</dbReference>
<dbReference type="InterPro" id="IPR002136">
    <property type="entry name" value="Ribosomal_uL4"/>
</dbReference>
<dbReference type="InterPro" id="IPR013005">
    <property type="entry name" value="Ribosomal_uL4-like"/>
</dbReference>
<dbReference type="InterPro" id="IPR023574">
    <property type="entry name" value="Ribosomal_uL4_dom_sf"/>
</dbReference>
<dbReference type="NCBIfam" id="TIGR03953">
    <property type="entry name" value="rplD_bact"/>
    <property type="match status" value="1"/>
</dbReference>
<dbReference type="PANTHER" id="PTHR10746">
    <property type="entry name" value="50S RIBOSOMAL PROTEIN L4"/>
    <property type="match status" value="1"/>
</dbReference>
<dbReference type="PANTHER" id="PTHR10746:SF6">
    <property type="entry name" value="LARGE RIBOSOMAL SUBUNIT PROTEIN UL4M"/>
    <property type="match status" value="1"/>
</dbReference>
<dbReference type="Pfam" id="PF00573">
    <property type="entry name" value="Ribosomal_L4"/>
    <property type="match status" value="1"/>
</dbReference>
<dbReference type="SUPFAM" id="SSF52166">
    <property type="entry name" value="Ribosomal protein L4"/>
    <property type="match status" value="1"/>
</dbReference>
<comment type="function">
    <text evidence="1">One of the primary rRNA binding proteins, this protein initially binds near the 5'-end of the 23S rRNA. It is important during the early stages of 50S assembly. It makes multiple contacts with different domains of the 23S rRNA in the assembled 50S subunit and ribosome.</text>
</comment>
<comment type="function">
    <text evidence="1">Forms part of the polypeptide exit tunnel.</text>
</comment>
<comment type="subunit">
    <text evidence="1">Part of the 50S ribosomal subunit.</text>
</comment>
<comment type="similarity">
    <text evidence="1">Belongs to the universal ribosomal protein uL4 family.</text>
</comment>
<accession>P61057</accession>
<accession>Q9JRA2</accession>
<keyword id="KW-1185">Reference proteome</keyword>
<keyword id="KW-0687">Ribonucleoprotein</keyword>
<keyword id="KW-0689">Ribosomal protein</keyword>
<keyword id="KW-0694">RNA-binding</keyword>
<keyword id="KW-0699">rRNA-binding</keyword>
<sequence>MELKVIDAKGQVSGSLSVSDALFAREYNEALVHQLVNAYLANARSGNRAQKTRAEVKHSTKKPWRQKGTGRARSGMTSSPLWRKGGRAFPNKPDENFTQKVNRKMYRAGMATILSQLTRDERLFAIEALTAETPKTKVFAEQVKNLGLEQVLFVTKQLDENVYLASRNLPNVLVLEAQQVDPYSLLRYKKVIITKDAVAQLEEQWV</sequence>
<gene>
    <name evidence="1" type="primary">rplD</name>
    <name type="ordered locus">NMB0143</name>
</gene>
<protein>
    <recommendedName>
        <fullName evidence="1">Large ribosomal subunit protein uL4</fullName>
    </recommendedName>
    <alternativeName>
        <fullName evidence="3">50S ribosomal protein L4</fullName>
    </alternativeName>
</protein>
<feature type="chain" id="PRO_0000129249" description="Large ribosomal subunit protein uL4">
    <location>
        <begin position="1"/>
        <end position="206"/>
    </location>
</feature>
<feature type="region of interest" description="Disordered" evidence="2">
    <location>
        <begin position="46"/>
        <end position="95"/>
    </location>
</feature>
<feature type="compositionally biased region" description="Basic residues" evidence="2">
    <location>
        <begin position="59"/>
        <end position="70"/>
    </location>
</feature>
<name>RL4_NEIMB</name>
<evidence type="ECO:0000255" key="1">
    <source>
        <dbReference type="HAMAP-Rule" id="MF_01328"/>
    </source>
</evidence>
<evidence type="ECO:0000256" key="2">
    <source>
        <dbReference type="SAM" id="MobiDB-lite"/>
    </source>
</evidence>
<evidence type="ECO:0000305" key="3"/>
<reference key="1">
    <citation type="journal article" date="2000" name="Science">
        <title>Complete genome sequence of Neisseria meningitidis serogroup B strain MC58.</title>
        <authorList>
            <person name="Tettelin H."/>
            <person name="Saunders N.J."/>
            <person name="Heidelberg J.F."/>
            <person name="Jeffries A.C."/>
            <person name="Nelson K.E."/>
            <person name="Eisen J.A."/>
            <person name="Ketchum K.A."/>
            <person name="Hood D.W."/>
            <person name="Peden J.F."/>
            <person name="Dodson R.J."/>
            <person name="Nelson W.C."/>
            <person name="Gwinn M.L."/>
            <person name="DeBoy R.T."/>
            <person name="Peterson J.D."/>
            <person name="Hickey E.K."/>
            <person name="Haft D.H."/>
            <person name="Salzberg S.L."/>
            <person name="White O."/>
            <person name="Fleischmann R.D."/>
            <person name="Dougherty B.A."/>
            <person name="Mason T.M."/>
            <person name="Ciecko A."/>
            <person name="Parksey D.S."/>
            <person name="Blair E."/>
            <person name="Cittone H."/>
            <person name="Clark E.B."/>
            <person name="Cotton M.D."/>
            <person name="Utterback T.R."/>
            <person name="Khouri H.M."/>
            <person name="Qin H."/>
            <person name="Vamathevan J.J."/>
            <person name="Gill J."/>
            <person name="Scarlato V."/>
            <person name="Masignani V."/>
            <person name="Pizza M."/>
            <person name="Grandi G."/>
            <person name="Sun L."/>
            <person name="Smith H.O."/>
            <person name="Fraser C.M."/>
            <person name="Moxon E.R."/>
            <person name="Rappuoli R."/>
            <person name="Venter J.C."/>
        </authorList>
    </citation>
    <scope>NUCLEOTIDE SEQUENCE [LARGE SCALE GENOMIC DNA]</scope>
    <source>
        <strain>ATCC BAA-335 / MC58</strain>
    </source>
</reference>
<organism>
    <name type="scientific">Neisseria meningitidis serogroup B (strain ATCC BAA-335 / MC58)</name>
    <dbReference type="NCBI Taxonomy" id="122586"/>
    <lineage>
        <taxon>Bacteria</taxon>
        <taxon>Pseudomonadati</taxon>
        <taxon>Pseudomonadota</taxon>
        <taxon>Betaproteobacteria</taxon>
        <taxon>Neisseriales</taxon>
        <taxon>Neisseriaceae</taxon>
        <taxon>Neisseria</taxon>
    </lineage>
</organism>
<proteinExistence type="inferred from homology"/>